<dbReference type="EC" id="4.2.1.11" evidence="1"/>
<dbReference type="EMBL" id="CP000859">
    <property type="protein sequence ID" value="ABW66149.1"/>
    <property type="molecule type" value="Genomic_DNA"/>
</dbReference>
<dbReference type="RefSeq" id="WP_012173768.1">
    <property type="nucleotide sequence ID" value="NC_009943.1"/>
</dbReference>
<dbReference type="SMR" id="A8ZSY5"/>
<dbReference type="STRING" id="96561.Dole_0339"/>
<dbReference type="KEGG" id="dol:Dole_0339"/>
<dbReference type="eggNOG" id="COG0148">
    <property type="taxonomic scope" value="Bacteria"/>
</dbReference>
<dbReference type="HOGENOM" id="CLU_031223_2_1_7"/>
<dbReference type="OrthoDB" id="9804716at2"/>
<dbReference type="UniPathway" id="UPA00109">
    <property type="reaction ID" value="UER00187"/>
</dbReference>
<dbReference type="Proteomes" id="UP000008561">
    <property type="component" value="Chromosome"/>
</dbReference>
<dbReference type="GO" id="GO:0009986">
    <property type="term" value="C:cell surface"/>
    <property type="evidence" value="ECO:0007669"/>
    <property type="project" value="UniProtKB-SubCell"/>
</dbReference>
<dbReference type="GO" id="GO:0005576">
    <property type="term" value="C:extracellular region"/>
    <property type="evidence" value="ECO:0007669"/>
    <property type="project" value="UniProtKB-SubCell"/>
</dbReference>
<dbReference type="GO" id="GO:0000015">
    <property type="term" value="C:phosphopyruvate hydratase complex"/>
    <property type="evidence" value="ECO:0007669"/>
    <property type="project" value="InterPro"/>
</dbReference>
<dbReference type="GO" id="GO:0000287">
    <property type="term" value="F:magnesium ion binding"/>
    <property type="evidence" value="ECO:0007669"/>
    <property type="project" value="UniProtKB-UniRule"/>
</dbReference>
<dbReference type="GO" id="GO:0004634">
    <property type="term" value="F:phosphopyruvate hydratase activity"/>
    <property type="evidence" value="ECO:0007669"/>
    <property type="project" value="UniProtKB-UniRule"/>
</dbReference>
<dbReference type="GO" id="GO:0006096">
    <property type="term" value="P:glycolytic process"/>
    <property type="evidence" value="ECO:0007669"/>
    <property type="project" value="UniProtKB-UniRule"/>
</dbReference>
<dbReference type="CDD" id="cd03313">
    <property type="entry name" value="enolase"/>
    <property type="match status" value="1"/>
</dbReference>
<dbReference type="FunFam" id="3.20.20.120:FF:000001">
    <property type="entry name" value="Enolase"/>
    <property type="match status" value="1"/>
</dbReference>
<dbReference type="FunFam" id="3.30.390.10:FF:000001">
    <property type="entry name" value="Enolase"/>
    <property type="match status" value="1"/>
</dbReference>
<dbReference type="Gene3D" id="3.20.20.120">
    <property type="entry name" value="Enolase-like C-terminal domain"/>
    <property type="match status" value="1"/>
</dbReference>
<dbReference type="Gene3D" id="3.30.390.10">
    <property type="entry name" value="Enolase-like, N-terminal domain"/>
    <property type="match status" value="1"/>
</dbReference>
<dbReference type="HAMAP" id="MF_00318">
    <property type="entry name" value="Enolase"/>
    <property type="match status" value="1"/>
</dbReference>
<dbReference type="InterPro" id="IPR000941">
    <property type="entry name" value="Enolase"/>
</dbReference>
<dbReference type="InterPro" id="IPR036849">
    <property type="entry name" value="Enolase-like_C_sf"/>
</dbReference>
<dbReference type="InterPro" id="IPR029017">
    <property type="entry name" value="Enolase-like_N"/>
</dbReference>
<dbReference type="InterPro" id="IPR020810">
    <property type="entry name" value="Enolase_C"/>
</dbReference>
<dbReference type="InterPro" id="IPR020809">
    <property type="entry name" value="Enolase_CS"/>
</dbReference>
<dbReference type="InterPro" id="IPR020811">
    <property type="entry name" value="Enolase_N"/>
</dbReference>
<dbReference type="NCBIfam" id="TIGR01060">
    <property type="entry name" value="eno"/>
    <property type="match status" value="1"/>
</dbReference>
<dbReference type="PANTHER" id="PTHR11902">
    <property type="entry name" value="ENOLASE"/>
    <property type="match status" value="1"/>
</dbReference>
<dbReference type="PANTHER" id="PTHR11902:SF1">
    <property type="entry name" value="ENOLASE"/>
    <property type="match status" value="1"/>
</dbReference>
<dbReference type="Pfam" id="PF00113">
    <property type="entry name" value="Enolase_C"/>
    <property type="match status" value="1"/>
</dbReference>
<dbReference type="Pfam" id="PF03952">
    <property type="entry name" value="Enolase_N"/>
    <property type="match status" value="1"/>
</dbReference>
<dbReference type="PIRSF" id="PIRSF001400">
    <property type="entry name" value="Enolase"/>
    <property type="match status" value="1"/>
</dbReference>
<dbReference type="PRINTS" id="PR00148">
    <property type="entry name" value="ENOLASE"/>
</dbReference>
<dbReference type="SFLD" id="SFLDS00001">
    <property type="entry name" value="Enolase"/>
    <property type="match status" value="1"/>
</dbReference>
<dbReference type="SFLD" id="SFLDF00002">
    <property type="entry name" value="enolase"/>
    <property type="match status" value="1"/>
</dbReference>
<dbReference type="SMART" id="SM01192">
    <property type="entry name" value="Enolase_C"/>
    <property type="match status" value="1"/>
</dbReference>
<dbReference type="SMART" id="SM01193">
    <property type="entry name" value="Enolase_N"/>
    <property type="match status" value="1"/>
</dbReference>
<dbReference type="SUPFAM" id="SSF51604">
    <property type="entry name" value="Enolase C-terminal domain-like"/>
    <property type="match status" value="1"/>
</dbReference>
<dbReference type="SUPFAM" id="SSF54826">
    <property type="entry name" value="Enolase N-terminal domain-like"/>
    <property type="match status" value="1"/>
</dbReference>
<dbReference type="PROSITE" id="PS00164">
    <property type="entry name" value="ENOLASE"/>
    <property type="match status" value="1"/>
</dbReference>
<keyword id="KW-0963">Cytoplasm</keyword>
<keyword id="KW-0324">Glycolysis</keyword>
<keyword id="KW-0456">Lyase</keyword>
<keyword id="KW-0460">Magnesium</keyword>
<keyword id="KW-0479">Metal-binding</keyword>
<keyword id="KW-1185">Reference proteome</keyword>
<keyword id="KW-0964">Secreted</keyword>
<gene>
    <name evidence="1" type="primary">eno</name>
    <name type="ordered locus">Dole_0339</name>
</gene>
<evidence type="ECO:0000255" key="1">
    <source>
        <dbReference type="HAMAP-Rule" id="MF_00318"/>
    </source>
</evidence>
<proteinExistence type="inferred from homology"/>
<protein>
    <recommendedName>
        <fullName evidence="1">Enolase</fullName>
        <ecNumber evidence="1">4.2.1.11</ecNumber>
    </recommendedName>
    <alternativeName>
        <fullName evidence="1">2-phospho-D-glycerate hydro-lyase</fullName>
    </alternativeName>
    <alternativeName>
        <fullName evidence="1">2-phosphoglycerate dehydratase</fullName>
    </alternativeName>
</protein>
<accession>A8ZSY5</accession>
<comment type="function">
    <text evidence="1">Catalyzes the reversible conversion of 2-phosphoglycerate (2-PG) into phosphoenolpyruvate (PEP). It is essential for the degradation of carbohydrates via glycolysis.</text>
</comment>
<comment type="catalytic activity">
    <reaction evidence="1">
        <text>(2R)-2-phosphoglycerate = phosphoenolpyruvate + H2O</text>
        <dbReference type="Rhea" id="RHEA:10164"/>
        <dbReference type="ChEBI" id="CHEBI:15377"/>
        <dbReference type="ChEBI" id="CHEBI:58289"/>
        <dbReference type="ChEBI" id="CHEBI:58702"/>
        <dbReference type="EC" id="4.2.1.11"/>
    </reaction>
</comment>
<comment type="cofactor">
    <cofactor evidence="1">
        <name>Mg(2+)</name>
        <dbReference type="ChEBI" id="CHEBI:18420"/>
    </cofactor>
    <text evidence="1">Binds a second Mg(2+) ion via substrate during catalysis.</text>
</comment>
<comment type="pathway">
    <text evidence="1">Carbohydrate degradation; glycolysis; pyruvate from D-glyceraldehyde 3-phosphate: step 4/5.</text>
</comment>
<comment type="subcellular location">
    <subcellularLocation>
        <location evidence="1">Cytoplasm</location>
    </subcellularLocation>
    <subcellularLocation>
        <location evidence="1">Secreted</location>
    </subcellularLocation>
    <subcellularLocation>
        <location evidence="1">Cell surface</location>
    </subcellularLocation>
    <text evidence="1">Fractions of enolase are present in both the cytoplasm and on the cell surface.</text>
</comment>
<comment type="similarity">
    <text evidence="1">Belongs to the enolase family.</text>
</comment>
<feature type="chain" id="PRO_1000115857" description="Enolase">
    <location>
        <begin position="1"/>
        <end position="426"/>
    </location>
</feature>
<feature type="active site" description="Proton donor" evidence="1">
    <location>
        <position position="205"/>
    </location>
</feature>
<feature type="active site" description="Proton acceptor" evidence="1">
    <location>
        <position position="337"/>
    </location>
</feature>
<feature type="binding site" evidence="1">
    <location>
        <position position="163"/>
    </location>
    <ligand>
        <name>(2R)-2-phosphoglycerate</name>
        <dbReference type="ChEBI" id="CHEBI:58289"/>
    </ligand>
</feature>
<feature type="binding site" evidence="1">
    <location>
        <position position="242"/>
    </location>
    <ligand>
        <name>Mg(2+)</name>
        <dbReference type="ChEBI" id="CHEBI:18420"/>
    </ligand>
</feature>
<feature type="binding site" evidence="1">
    <location>
        <position position="285"/>
    </location>
    <ligand>
        <name>Mg(2+)</name>
        <dbReference type="ChEBI" id="CHEBI:18420"/>
    </ligand>
</feature>
<feature type="binding site" evidence="1">
    <location>
        <position position="312"/>
    </location>
    <ligand>
        <name>Mg(2+)</name>
        <dbReference type="ChEBI" id="CHEBI:18420"/>
    </ligand>
</feature>
<feature type="binding site" evidence="1">
    <location>
        <position position="337"/>
    </location>
    <ligand>
        <name>(2R)-2-phosphoglycerate</name>
        <dbReference type="ChEBI" id="CHEBI:58289"/>
    </ligand>
</feature>
<feature type="binding site" evidence="1">
    <location>
        <position position="366"/>
    </location>
    <ligand>
        <name>(2R)-2-phosphoglycerate</name>
        <dbReference type="ChEBI" id="CHEBI:58289"/>
    </ligand>
</feature>
<feature type="binding site" evidence="1">
    <location>
        <position position="367"/>
    </location>
    <ligand>
        <name>(2R)-2-phosphoglycerate</name>
        <dbReference type="ChEBI" id="CHEBI:58289"/>
    </ligand>
</feature>
<feature type="binding site" evidence="1">
    <location>
        <position position="388"/>
    </location>
    <ligand>
        <name>(2R)-2-phosphoglycerate</name>
        <dbReference type="ChEBI" id="CHEBI:58289"/>
    </ligand>
</feature>
<name>ENO_DESOH</name>
<reference key="1">
    <citation type="submission" date="2007-10" db="EMBL/GenBank/DDBJ databases">
        <title>Complete sequence of Desulfococcus oleovorans Hxd3.</title>
        <authorList>
            <consortium name="US DOE Joint Genome Institute"/>
            <person name="Copeland A."/>
            <person name="Lucas S."/>
            <person name="Lapidus A."/>
            <person name="Barry K."/>
            <person name="Glavina del Rio T."/>
            <person name="Dalin E."/>
            <person name="Tice H."/>
            <person name="Pitluck S."/>
            <person name="Kiss H."/>
            <person name="Brettin T."/>
            <person name="Bruce D."/>
            <person name="Detter J.C."/>
            <person name="Han C."/>
            <person name="Schmutz J."/>
            <person name="Larimer F."/>
            <person name="Land M."/>
            <person name="Hauser L."/>
            <person name="Kyrpides N."/>
            <person name="Kim E."/>
            <person name="Wawrik B."/>
            <person name="Richardson P."/>
        </authorList>
    </citation>
    <scope>NUCLEOTIDE SEQUENCE [LARGE SCALE GENOMIC DNA]</scope>
    <source>
        <strain>DSM 6200 / JCM 39069 / Hxd3</strain>
    </source>
</reference>
<sequence>MIEIIEVQAREILDSRGNPTVEVDVTLSGGATGRAAVPSGASTGTREALELRDTRKKRYLGKGVEKAVENVNTLIGPVLYGMPADEQFMVDSTMIGLDGTANKSKLGANAILGVSMAVARAAADAYELPLYRYLGGIHAKHLPMPMMNIVNGGAHAANSLDIQEFMIIPVGGKTIAECVRMGAEVFHTLKKLLKAKGFATAVGDEGGFAPDLESNEAAIGFIMEAIKKAGYRPGRDVGIALDAAASEFYEKGKYVLKGEGKKLSSKQMVDYYENLIDKYPILSIEDGLAEQDWDNWVMMTDRLGNTTQIVGDDVFVTNPAIFEKGIREGLANSILIKLNQIGTVSETLQAIDMAKQAGYTTVISHRSGETEDAFIADLAVGVNGGQIKTGSLSRSDRIAKYNQLIRIEEALGAGAVLSNDFTAVVR</sequence>
<organism>
    <name type="scientific">Desulfosudis oleivorans (strain DSM 6200 / JCM 39069 / Hxd3)</name>
    <name type="common">Desulfococcus oleovorans</name>
    <dbReference type="NCBI Taxonomy" id="96561"/>
    <lineage>
        <taxon>Bacteria</taxon>
        <taxon>Pseudomonadati</taxon>
        <taxon>Thermodesulfobacteriota</taxon>
        <taxon>Desulfobacteria</taxon>
        <taxon>Desulfobacterales</taxon>
        <taxon>Desulfosudaceae</taxon>
        <taxon>Desulfosudis</taxon>
    </lineage>
</organism>